<gene>
    <name evidence="4" type="primary">SH3GL1</name>
    <name evidence="11" type="synonym">SH3P8</name>
</gene>
<organism>
    <name type="scientific">Gallus gallus</name>
    <name type="common">Chicken</name>
    <dbReference type="NCBI Taxonomy" id="9031"/>
    <lineage>
        <taxon>Eukaryota</taxon>
        <taxon>Metazoa</taxon>
        <taxon>Chordata</taxon>
        <taxon>Craniata</taxon>
        <taxon>Vertebrata</taxon>
        <taxon>Euteleostomi</taxon>
        <taxon>Archelosauria</taxon>
        <taxon>Archosauria</taxon>
        <taxon>Dinosauria</taxon>
        <taxon>Saurischia</taxon>
        <taxon>Theropoda</taxon>
        <taxon>Coelurosauria</taxon>
        <taxon>Aves</taxon>
        <taxon>Neognathae</taxon>
        <taxon>Galloanserae</taxon>
        <taxon>Galliformes</taxon>
        <taxon>Phasianidae</taxon>
        <taxon>Phasianinae</taxon>
        <taxon>Gallus</taxon>
    </lineage>
</organism>
<accession>Q8AXV0</accession>
<comment type="function">
    <text evidence="3">Implicated in endocytosis. May recruit other proteins to membranes with high curvature (By similarity).</text>
</comment>
<comment type="subunit">
    <text evidence="4 9">Interacts with ARC (By similarity). Interacts with SYNJ1 and DNM1.</text>
</comment>
<comment type="subcellular location">
    <subcellularLocation>
        <location evidence="4">Cytoplasm</location>
    </subcellularLocation>
    <subcellularLocation>
        <location evidence="4">Early endosome membrane</location>
        <topology evidence="4">Peripheral membrane protein</topology>
    </subcellularLocation>
    <subcellularLocation>
        <location evidence="1">Cell projection</location>
        <location evidence="1">Podosome</location>
    </subcellularLocation>
    <text evidence="4">Associated with postsynaptic endosomes in hippocampal neurons.</text>
</comment>
<comment type="tissue specificity">
    <text evidence="9">Highest level in central region of the theca of developing follicles (at protein level). Expressed at highest level in brain and testis, at high level in kidney, lung and stroma, low level in spleen and adrenal gland (at protein level). Expressed in most tissue with highest levels in small ovarian follicles, brain and testis.</text>
</comment>
<comment type="developmental stage">
    <text evidence="9">Expressed throughout follicle development with highest level in small white follicles. Expressed in granulosa cells, theca cells and post-ovulatory sacs of developing follicles.</text>
</comment>
<comment type="domain">
    <text evidence="2">An N-terminal amphipathic helix, the BAR domain and a second amphipathic helix inserted into helix 1 of the BAR domain (N-BAR domain) induce membrane curvature and bind curved membranes.</text>
</comment>
<comment type="similarity">
    <text evidence="5">Belongs to the endophilin family.</text>
</comment>
<evidence type="ECO:0000250" key="1"/>
<evidence type="ECO:0000250" key="2">
    <source>
        <dbReference type="UniProtKB" id="O35179"/>
    </source>
</evidence>
<evidence type="ECO:0000250" key="3">
    <source>
        <dbReference type="UniProtKB" id="O35180"/>
    </source>
</evidence>
<evidence type="ECO:0000250" key="4">
    <source>
        <dbReference type="UniProtKB" id="O35964"/>
    </source>
</evidence>
<evidence type="ECO:0000255" key="5"/>
<evidence type="ECO:0000255" key="6">
    <source>
        <dbReference type="PROSITE-ProRule" id="PRU00192"/>
    </source>
</evidence>
<evidence type="ECO:0000255" key="7">
    <source>
        <dbReference type="PROSITE-ProRule" id="PRU00361"/>
    </source>
</evidence>
<evidence type="ECO:0000256" key="8">
    <source>
        <dbReference type="SAM" id="MobiDB-lite"/>
    </source>
</evidence>
<evidence type="ECO:0000269" key="9">
    <source>
    </source>
</evidence>
<evidence type="ECO:0000305" key="10"/>
<evidence type="ECO:0000312" key="11">
    <source>
        <dbReference type="EMBL" id="CAD27936.1"/>
    </source>
</evidence>
<reference evidence="10 11" key="1">
    <citation type="journal article" date="2003" name="Biol. Reprod.">
        <title>Receptor-mediated chicken oocyte growth: differential expression of endophilin isoforms in developing follicles.</title>
        <authorList>
            <person name="Hirayama S."/>
            <person name="Bajari T.M."/>
            <person name="Nimpf J."/>
            <person name="Schneider W.J."/>
        </authorList>
    </citation>
    <scope>NUCLEOTIDE SEQUENCE [MRNA]</scope>
    <scope>TISSUE SPECIFICITY</scope>
    <scope>DEVELOPMENTAL STAGE</scope>
    <scope>INTERACTION WITH SYNJ1 AND DNM1</scope>
    <source>
        <tissue evidence="11">Brain</tissue>
    </source>
</reference>
<proteinExistence type="evidence at protein level"/>
<sequence>MSVAGLKKQFYKASQLVSEKVGGAEGTKLDDDFKEMEKKVDLTSKAVTEVLTRTIEYLQPNPASRAKLTMLNTMSKIRGQVKNPGYPQSEGLLGESMIRYGKELGEDSNFGDALLDAGESMKRLAEVKDSLDIEVKQNFIDPLQNLCDKDLKEIQHHLKKLEGRRLDFDYKKKRQGKIPDEELRQAMEKFEESKEVAETSMHNLLETDIEQVSQLSALVDAQLDYHRQAVQILDELAEKLKRRMREASSRPRREYKPKPRETYDFGESDQSNGGFSCTPTPKVSASSSFRSDKPFRTSVRSIPHLDQPCCKALYDFEPENDGELGFKEGDIITLTNQIDENWYEGMINGQSGFFPLNYVEVLVPLPQ</sequence>
<dbReference type="EMBL" id="AJ439351">
    <property type="protein sequence ID" value="CAD27936.1"/>
    <property type="molecule type" value="mRNA"/>
</dbReference>
<dbReference type="RefSeq" id="NP_989860.1">
    <property type="nucleotide sequence ID" value="NM_204529.2"/>
</dbReference>
<dbReference type="SMR" id="Q8AXV0"/>
<dbReference type="BioGRID" id="675496">
    <property type="interactions" value="4"/>
</dbReference>
<dbReference type="FunCoup" id="Q8AXV0">
    <property type="interactions" value="2621"/>
</dbReference>
<dbReference type="STRING" id="9031.ENSGALP00000001688"/>
<dbReference type="PaxDb" id="9031-ENSGALP00000001688"/>
<dbReference type="GeneID" id="395202"/>
<dbReference type="KEGG" id="gga:395202"/>
<dbReference type="CTD" id="6455"/>
<dbReference type="VEuPathDB" id="HostDB:geneid_395202"/>
<dbReference type="eggNOG" id="KOG1118">
    <property type="taxonomic scope" value="Eukaryota"/>
</dbReference>
<dbReference type="HOGENOM" id="CLU_047887_0_0_1"/>
<dbReference type="InParanoid" id="Q8AXV0"/>
<dbReference type="OMA" id="MFPANYC"/>
<dbReference type="OrthoDB" id="443981at2759"/>
<dbReference type="PhylomeDB" id="Q8AXV0"/>
<dbReference type="TreeFam" id="TF313281"/>
<dbReference type="PRO" id="PR:Q8AXV0"/>
<dbReference type="Proteomes" id="UP000000539">
    <property type="component" value="Unassembled WGS sequence"/>
</dbReference>
<dbReference type="GO" id="GO:0070161">
    <property type="term" value="C:anchoring junction"/>
    <property type="evidence" value="ECO:0007669"/>
    <property type="project" value="UniProtKB-KW"/>
</dbReference>
<dbReference type="GO" id="GO:0042995">
    <property type="term" value="C:cell projection"/>
    <property type="evidence" value="ECO:0007669"/>
    <property type="project" value="UniProtKB-KW"/>
</dbReference>
<dbReference type="GO" id="GO:0005737">
    <property type="term" value="C:cytoplasm"/>
    <property type="evidence" value="ECO:0000318"/>
    <property type="project" value="GO_Central"/>
</dbReference>
<dbReference type="GO" id="GO:0031901">
    <property type="term" value="C:early endosome membrane"/>
    <property type="evidence" value="ECO:0007669"/>
    <property type="project" value="UniProtKB-SubCell"/>
</dbReference>
<dbReference type="GO" id="GO:0098978">
    <property type="term" value="C:glutamatergic synapse"/>
    <property type="evidence" value="ECO:0000318"/>
    <property type="project" value="GO_Central"/>
</dbReference>
<dbReference type="GO" id="GO:0002102">
    <property type="term" value="C:podosome"/>
    <property type="evidence" value="ECO:0007669"/>
    <property type="project" value="UniProtKB-SubCell"/>
</dbReference>
<dbReference type="GO" id="GO:0098793">
    <property type="term" value="C:presynapse"/>
    <property type="evidence" value="ECO:0000318"/>
    <property type="project" value="GO_Central"/>
</dbReference>
<dbReference type="GO" id="GO:0008289">
    <property type="term" value="F:lipid binding"/>
    <property type="evidence" value="ECO:0007669"/>
    <property type="project" value="UniProtKB-KW"/>
</dbReference>
<dbReference type="GO" id="GO:0006897">
    <property type="term" value="P:endocytosis"/>
    <property type="evidence" value="ECO:0007669"/>
    <property type="project" value="UniProtKB-KW"/>
</dbReference>
<dbReference type="CDD" id="cd07614">
    <property type="entry name" value="BAR_Endophilin_A2"/>
    <property type="match status" value="1"/>
</dbReference>
<dbReference type="CDD" id="cd11803">
    <property type="entry name" value="SH3_Endophilin_A"/>
    <property type="match status" value="1"/>
</dbReference>
<dbReference type="FunFam" id="2.30.30.40:FF:000053">
    <property type="entry name" value="endophilin-A1 isoform X2"/>
    <property type="match status" value="1"/>
</dbReference>
<dbReference type="FunFam" id="1.20.1270.60:FF:000021">
    <property type="entry name" value="Endophilin-A2 isoform 1"/>
    <property type="match status" value="1"/>
</dbReference>
<dbReference type="Gene3D" id="1.20.1270.60">
    <property type="entry name" value="Arfaptin homology (AH) domain/BAR domain"/>
    <property type="match status" value="1"/>
</dbReference>
<dbReference type="Gene3D" id="2.30.30.40">
    <property type="entry name" value="SH3 Domains"/>
    <property type="match status" value="1"/>
</dbReference>
<dbReference type="InterPro" id="IPR027267">
    <property type="entry name" value="AH/BAR_dom_sf"/>
</dbReference>
<dbReference type="InterPro" id="IPR004148">
    <property type="entry name" value="BAR_dom"/>
</dbReference>
<dbReference type="InterPro" id="IPR035824">
    <property type="entry name" value="Endophilin_A_SH3"/>
</dbReference>
<dbReference type="InterPro" id="IPR050384">
    <property type="entry name" value="Endophilin_SH3RF"/>
</dbReference>
<dbReference type="InterPro" id="IPR036028">
    <property type="entry name" value="SH3-like_dom_sf"/>
</dbReference>
<dbReference type="InterPro" id="IPR001452">
    <property type="entry name" value="SH3_domain"/>
</dbReference>
<dbReference type="PANTHER" id="PTHR14167:SF63">
    <property type="entry name" value="ENDOPHILIN-A2"/>
    <property type="match status" value="1"/>
</dbReference>
<dbReference type="PANTHER" id="PTHR14167">
    <property type="entry name" value="SH3 DOMAIN-CONTAINING"/>
    <property type="match status" value="1"/>
</dbReference>
<dbReference type="Pfam" id="PF03114">
    <property type="entry name" value="BAR"/>
    <property type="match status" value="1"/>
</dbReference>
<dbReference type="Pfam" id="PF00018">
    <property type="entry name" value="SH3_1"/>
    <property type="match status" value="1"/>
</dbReference>
<dbReference type="PRINTS" id="PR00452">
    <property type="entry name" value="SH3DOMAIN"/>
</dbReference>
<dbReference type="PRINTS" id="PR01887">
    <property type="entry name" value="SPECTRNALPHA"/>
</dbReference>
<dbReference type="SMART" id="SM00721">
    <property type="entry name" value="BAR"/>
    <property type="match status" value="1"/>
</dbReference>
<dbReference type="SMART" id="SM00326">
    <property type="entry name" value="SH3"/>
    <property type="match status" value="1"/>
</dbReference>
<dbReference type="SUPFAM" id="SSF103657">
    <property type="entry name" value="BAR/IMD domain-like"/>
    <property type="match status" value="1"/>
</dbReference>
<dbReference type="SUPFAM" id="SSF50044">
    <property type="entry name" value="SH3-domain"/>
    <property type="match status" value="1"/>
</dbReference>
<dbReference type="PROSITE" id="PS51021">
    <property type="entry name" value="BAR"/>
    <property type="match status" value="1"/>
</dbReference>
<dbReference type="PROSITE" id="PS50002">
    <property type="entry name" value="SH3"/>
    <property type="match status" value="1"/>
</dbReference>
<feature type="chain" id="PRO_0000309486" description="Endophilin-A2">
    <location>
        <begin position="1"/>
        <end position="367"/>
    </location>
</feature>
<feature type="domain" description="BAR" evidence="7">
    <location>
        <begin position="18"/>
        <end position="249"/>
    </location>
</feature>
<feature type="domain" description="SH3" evidence="6">
    <location>
        <begin position="305"/>
        <end position="364"/>
    </location>
</feature>
<feature type="region of interest" description="Membrane-binding amphipathic helix" evidence="2">
    <location>
        <begin position="1"/>
        <end position="21"/>
    </location>
</feature>
<feature type="region of interest" description="Required for dimerization upon membrane association" evidence="2">
    <location>
        <begin position="60"/>
        <end position="87"/>
    </location>
</feature>
<feature type="region of interest" description="Interaction with ARC" evidence="4">
    <location>
        <begin position="218"/>
        <end position="254"/>
    </location>
</feature>
<feature type="region of interest" description="Disordered" evidence="8">
    <location>
        <begin position="243"/>
        <end position="293"/>
    </location>
</feature>
<feature type="coiled-coil region" evidence="5">
    <location>
        <begin position="181"/>
        <end position="250"/>
    </location>
</feature>
<feature type="compositionally biased region" description="Basic and acidic residues" evidence="8">
    <location>
        <begin position="245"/>
        <end position="263"/>
    </location>
</feature>
<feature type="compositionally biased region" description="Polar residues" evidence="8">
    <location>
        <begin position="268"/>
        <end position="289"/>
    </location>
</feature>
<name>SH3G1_CHICK</name>
<keyword id="KW-0965">Cell junction</keyword>
<keyword id="KW-0966">Cell projection</keyword>
<keyword id="KW-0175">Coiled coil</keyword>
<keyword id="KW-0963">Cytoplasm</keyword>
<keyword id="KW-0254">Endocytosis</keyword>
<keyword id="KW-0967">Endosome</keyword>
<keyword id="KW-0446">Lipid-binding</keyword>
<keyword id="KW-0472">Membrane</keyword>
<keyword id="KW-1185">Reference proteome</keyword>
<keyword id="KW-0728">SH3 domain</keyword>
<protein>
    <recommendedName>
        <fullName>Endophilin-A2</fullName>
    </recommendedName>
    <alternativeName>
        <fullName>Endophilin-2</fullName>
    </alternativeName>
    <alternativeName>
        <fullName>SH3 domain-containing GRB2-like protein 2</fullName>
    </alternativeName>
    <alternativeName>
        <fullName>SH3p8</fullName>
    </alternativeName>
</protein>